<accession>Q1CRV4</accession>
<name>RS14Z_HELPH</name>
<keyword id="KW-0479">Metal-binding</keyword>
<keyword id="KW-0687">Ribonucleoprotein</keyword>
<keyword id="KW-0689">Ribosomal protein</keyword>
<keyword id="KW-0694">RNA-binding</keyword>
<keyword id="KW-0699">rRNA-binding</keyword>
<keyword id="KW-0862">Zinc</keyword>
<reference key="1">
    <citation type="journal article" date="2006" name="Proc. Natl. Acad. Sci. U.S.A.">
        <title>The complete genome sequence of a chronic atrophic gastritis Helicobacter pylori strain: evolution during disease progression.</title>
        <authorList>
            <person name="Oh J.D."/>
            <person name="Kling-Baeckhed H."/>
            <person name="Giannakis M."/>
            <person name="Xu J."/>
            <person name="Fulton R.S."/>
            <person name="Fulton L.A."/>
            <person name="Cordum H.S."/>
            <person name="Wang C."/>
            <person name="Elliott G."/>
            <person name="Edwards J."/>
            <person name="Mardis E.R."/>
            <person name="Engstrand L.G."/>
            <person name="Gordon J.I."/>
        </authorList>
    </citation>
    <scope>NUCLEOTIDE SEQUENCE [LARGE SCALE GENOMIC DNA]</scope>
    <source>
        <strain>HPAG1</strain>
    </source>
</reference>
<feature type="chain" id="PRO_0000269106" description="Small ribosomal subunit protein uS14">
    <location>
        <begin position="1"/>
        <end position="61"/>
    </location>
</feature>
<feature type="binding site" evidence="1">
    <location>
        <position position="24"/>
    </location>
    <ligand>
        <name>Zn(2+)</name>
        <dbReference type="ChEBI" id="CHEBI:29105"/>
    </ligand>
</feature>
<feature type="binding site" evidence="1">
    <location>
        <position position="27"/>
    </location>
    <ligand>
        <name>Zn(2+)</name>
        <dbReference type="ChEBI" id="CHEBI:29105"/>
    </ligand>
</feature>
<feature type="binding site" evidence="1">
    <location>
        <position position="40"/>
    </location>
    <ligand>
        <name>Zn(2+)</name>
        <dbReference type="ChEBI" id="CHEBI:29105"/>
    </ligand>
</feature>
<feature type="binding site" evidence="1">
    <location>
        <position position="43"/>
    </location>
    <ligand>
        <name>Zn(2+)</name>
        <dbReference type="ChEBI" id="CHEBI:29105"/>
    </ligand>
</feature>
<organism>
    <name type="scientific">Helicobacter pylori (strain HPAG1)</name>
    <dbReference type="NCBI Taxonomy" id="357544"/>
    <lineage>
        <taxon>Bacteria</taxon>
        <taxon>Pseudomonadati</taxon>
        <taxon>Campylobacterota</taxon>
        <taxon>Epsilonproteobacteria</taxon>
        <taxon>Campylobacterales</taxon>
        <taxon>Helicobacteraceae</taxon>
        <taxon>Helicobacter</taxon>
    </lineage>
</organism>
<gene>
    <name evidence="1" type="primary">rpsZ</name>
    <name evidence="1" type="synonym">rpsN</name>
    <name type="ordered locus">HPAG1_1251</name>
</gene>
<protein>
    <recommendedName>
        <fullName evidence="1">Small ribosomal subunit protein uS14</fullName>
    </recommendedName>
    <alternativeName>
        <fullName evidence="2">30S ribosomal protein S14 type Z</fullName>
    </alternativeName>
</protein>
<dbReference type="EMBL" id="CP000241">
    <property type="protein sequence ID" value="ABF85318.1"/>
    <property type="molecule type" value="Genomic_DNA"/>
</dbReference>
<dbReference type="RefSeq" id="WP_001085694.1">
    <property type="nucleotide sequence ID" value="NC_008086.1"/>
</dbReference>
<dbReference type="SMR" id="Q1CRV4"/>
<dbReference type="KEGG" id="hpa:HPAG1_1251"/>
<dbReference type="HOGENOM" id="CLU_139869_3_0_7"/>
<dbReference type="GO" id="GO:0005737">
    <property type="term" value="C:cytoplasm"/>
    <property type="evidence" value="ECO:0007669"/>
    <property type="project" value="UniProtKB-ARBA"/>
</dbReference>
<dbReference type="GO" id="GO:0015935">
    <property type="term" value="C:small ribosomal subunit"/>
    <property type="evidence" value="ECO:0007669"/>
    <property type="project" value="TreeGrafter"/>
</dbReference>
<dbReference type="GO" id="GO:0019843">
    <property type="term" value="F:rRNA binding"/>
    <property type="evidence" value="ECO:0007669"/>
    <property type="project" value="UniProtKB-UniRule"/>
</dbReference>
<dbReference type="GO" id="GO:0003735">
    <property type="term" value="F:structural constituent of ribosome"/>
    <property type="evidence" value="ECO:0007669"/>
    <property type="project" value="InterPro"/>
</dbReference>
<dbReference type="GO" id="GO:0008270">
    <property type="term" value="F:zinc ion binding"/>
    <property type="evidence" value="ECO:0007669"/>
    <property type="project" value="UniProtKB-UniRule"/>
</dbReference>
<dbReference type="GO" id="GO:0006412">
    <property type="term" value="P:translation"/>
    <property type="evidence" value="ECO:0007669"/>
    <property type="project" value="UniProtKB-UniRule"/>
</dbReference>
<dbReference type="FunFam" id="4.10.830.10:FF:000001">
    <property type="entry name" value="30S ribosomal protein S14 type Z"/>
    <property type="match status" value="1"/>
</dbReference>
<dbReference type="Gene3D" id="4.10.830.10">
    <property type="entry name" value="30s Ribosomal Protein S14, Chain N"/>
    <property type="match status" value="1"/>
</dbReference>
<dbReference type="HAMAP" id="MF_01364_B">
    <property type="entry name" value="Ribosomal_uS14_2_B"/>
    <property type="match status" value="1"/>
</dbReference>
<dbReference type="InterPro" id="IPR001209">
    <property type="entry name" value="Ribosomal_uS14"/>
</dbReference>
<dbReference type="InterPro" id="IPR023053">
    <property type="entry name" value="Ribosomal_uS14_bact"/>
</dbReference>
<dbReference type="InterPro" id="IPR018271">
    <property type="entry name" value="Ribosomal_uS14_CS"/>
</dbReference>
<dbReference type="InterPro" id="IPR043140">
    <property type="entry name" value="Ribosomal_uS14_sf"/>
</dbReference>
<dbReference type="NCBIfam" id="NF005974">
    <property type="entry name" value="PRK08061.1"/>
    <property type="match status" value="1"/>
</dbReference>
<dbReference type="PANTHER" id="PTHR19836">
    <property type="entry name" value="30S RIBOSOMAL PROTEIN S14"/>
    <property type="match status" value="1"/>
</dbReference>
<dbReference type="PANTHER" id="PTHR19836:SF19">
    <property type="entry name" value="SMALL RIBOSOMAL SUBUNIT PROTEIN US14M"/>
    <property type="match status" value="1"/>
</dbReference>
<dbReference type="Pfam" id="PF00253">
    <property type="entry name" value="Ribosomal_S14"/>
    <property type="match status" value="1"/>
</dbReference>
<dbReference type="SUPFAM" id="SSF57716">
    <property type="entry name" value="Glucocorticoid receptor-like (DNA-binding domain)"/>
    <property type="match status" value="1"/>
</dbReference>
<dbReference type="PROSITE" id="PS00527">
    <property type="entry name" value="RIBOSOMAL_S14"/>
    <property type="match status" value="1"/>
</dbReference>
<comment type="function">
    <text evidence="1">Binds 16S rRNA, required for the assembly of 30S particles and may also be responsible for determining the conformation of the 16S rRNA at the A site.</text>
</comment>
<comment type="cofactor">
    <cofactor evidence="1">
        <name>Zn(2+)</name>
        <dbReference type="ChEBI" id="CHEBI:29105"/>
    </cofactor>
    <text evidence="1">Binds 1 zinc ion per subunit.</text>
</comment>
<comment type="subunit">
    <text evidence="1">Part of the 30S ribosomal subunit. Contacts proteins S3 and S10.</text>
</comment>
<comment type="similarity">
    <text evidence="1">Belongs to the universal ribosomal protein uS14 family. Zinc-binding uS14 subfamily.</text>
</comment>
<sequence length="61" mass="7043">MAKKSMIAKAQRKPKFQVRAYTRCRICGRPHSVYRDFGLCRVCLRKMGSEGLIPGLRKASW</sequence>
<proteinExistence type="inferred from homology"/>
<evidence type="ECO:0000255" key="1">
    <source>
        <dbReference type="HAMAP-Rule" id="MF_01364"/>
    </source>
</evidence>
<evidence type="ECO:0000305" key="2"/>